<dbReference type="EMBL" id="D64009">
    <property type="protein sequence ID" value="BAA10889.1"/>
    <property type="molecule type" value="mRNA"/>
</dbReference>
<dbReference type="EMBL" id="D64010">
    <property type="protein sequence ID" value="BAA10890.1"/>
    <property type="molecule type" value="mRNA"/>
</dbReference>
<dbReference type="EMBL" id="D29763">
    <property type="protein sequence ID" value="BAA06167.1"/>
    <property type="molecule type" value="mRNA"/>
</dbReference>
<dbReference type="EMBL" id="AB206791">
    <property type="protein sequence ID" value="BAE44444.1"/>
    <property type="molecule type" value="mRNA"/>
</dbReference>
<dbReference type="EMBL" id="AL591065">
    <property type="status" value="NOT_ANNOTATED_CDS"/>
    <property type="molecule type" value="Genomic_DNA"/>
</dbReference>
<dbReference type="EMBL" id="AL845484">
    <property type="status" value="NOT_ANNOTATED_CDS"/>
    <property type="molecule type" value="Genomic_DNA"/>
</dbReference>
<dbReference type="EMBL" id="BC053011">
    <property type="protein sequence ID" value="AAH53011.1"/>
    <property type="molecule type" value="mRNA"/>
</dbReference>
<dbReference type="EMBL" id="BC055345">
    <property type="protein sequence ID" value="AAH55345.1"/>
    <property type="molecule type" value="mRNA"/>
</dbReference>
<dbReference type="EMBL" id="AK161576">
    <property type="protein sequence ID" value="BAE36472.1"/>
    <property type="status" value="ALT_INIT"/>
    <property type="molecule type" value="mRNA"/>
</dbReference>
<dbReference type="CCDS" id="CCDS25087.1">
    <molecule id="Q7TSK2-1"/>
</dbReference>
<dbReference type="CCDS" id="CCDS70255.1">
    <molecule id="Q7TSK2-2"/>
</dbReference>
<dbReference type="PIR" id="I52657">
    <property type="entry name" value="I52657"/>
</dbReference>
<dbReference type="RefSeq" id="NP_001278154.1">
    <molecule id="Q7TSK2-2"/>
    <property type="nucleotide sequence ID" value="NM_001291225.2"/>
</dbReference>
<dbReference type="RefSeq" id="NP_067261.2">
    <molecule id="Q7TSK2-1"/>
    <property type="nucleotide sequence ID" value="NM_021286.4"/>
</dbReference>
<dbReference type="RefSeq" id="XP_006532703.1">
    <property type="nucleotide sequence ID" value="XM_006532640.2"/>
</dbReference>
<dbReference type="SMR" id="Q7TSK2"/>
<dbReference type="FunCoup" id="Q7TSK2">
    <property type="interactions" value="447"/>
</dbReference>
<dbReference type="STRING" id="10090.ENSMUSP00000091532"/>
<dbReference type="GlyConnect" id="2693">
    <property type="glycosylation" value="1 N-Linked glycan (1 site)"/>
</dbReference>
<dbReference type="GlyCosmos" id="Q7TSK2">
    <property type="glycosylation" value="4 sites, 1 glycan"/>
</dbReference>
<dbReference type="GlyGen" id="Q7TSK2">
    <property type="glycosylation" value="7 sites, 2 N-linked glycans (2 sites)"/>
</dbReference>
<dbReference type="iPTMnet" id="Q7TSK2"/>
<dbReference type="PhosphoSitePlus" id="Q7TSK2"/>
<dbReference type="PaxDb" id="10090-ENSMUSP00000091532"/>
<dbReference type="ProteomicsDB" id="256626">
    <molecule id="Q7TSK2-1"/>
</dbReference>
<dbReference type="ProteomicsDB" id="256627">
    <molecule id="Q7TSK2-2"/>
</dbReference>
<dbReference type="ProteomicsDB" id="256628">
    <molecule id="Q7TSK2-3"/>
</dbReference>
<dbReference type="Antibodypedia" id="2178">
    <property type="antibodies" value="133 antibodies from 14 providers"/>
</dbReference>
<dbReference type="DNASU" id="20370"/>
<dbReference type="Ensembl" id="ENSMUST00000000646.14">
    <molecule id="Q7TSK2-2"/>
    <property type="protein sequence ID" value="ENSMUSP00000000646.8"/>
    <property type="gene ID" value="ENSMUSG00000000632.14"/>
</dbReference>
<dbReference type="Ensembl" id="ENSMUST00000093995.10">
    <molecule id="Q7TSK2-1"/>
    <property type="protein sequence ID" value="ENSMUSP00000091532.4"/>
    <property type="gene ID" value="ENSMUSG00000000632.14"/>
</dbReference>
<dbReference type="GeneID" id="20370"/>
<dbReference type="KEGG" id="mmu:20370"/>
<dbReference type="UCSC" id="uc007khn.2">
    <molecule id="Q7TSK2-3"/>
    <property type="organism name" value="mouse"/>
</dbReference>
<dbReference type="UCSC" id="uc007kho.2">
    <molecule id="Q7TSK2-2"/>
    <property type="organism name" value="mouse"/>
</dbReference>
<dbReference type="UCSC" id="uc007khp.2">
    <molecule id="Q7TSK2-1"/>
    <property type="organism name" value="mouse"/>
</dbReference>
<dbReference type="AGR" id="MGI:104745"/>
<dbReference type="CTD" id="124925"/>
<dbReference type="MGI" id="MGI:104745">
    <property type="gene designation" value="Sez6"/>
</dbReference>
<dbReference type="VEuPathDB" id="HostDB:ENSMUSG00000000632"/>
<dbReference type="eggNOG" id="KOG4297">
    <property type="taxonomic scope" value="Eukaryota"/>
</dbReference>
<dbReference type="GeneTree" id="ENSGT00940000156995"/>
<dbReference type="HOGENOM" id="CLU_011474_2_0_1"/>
<dbReference type="InParanoid" id="Q7TSK2"/>
<dbReference type="OMA" id="EIVCHDR"/>
<dbReference type="OrthoDB" id="9935125at2759"/>
<dbReference type="PhylomeDB" id="Q7TSK2"/>
<dbReference type="TreeFam" id="TF330037"/>
<dbReference type="BioGRID-ORCS" id="20370">
    <property type="hits" value="3 hits in 78 CRISPR screens"/>
</dbReference>
<dbReference type="ChiTaRS" id="Sez6">
    <property type="organism name" value="mouse"/>
</dbReference>
<dbReference type="PRO" id="PR:Q7TSK2"/>
<dbReference type="Proteomes" id="UP000000589">
    <property type="component" value="Chromosome 11"/>
</dbReference>
<dbReference type="RNAct" id="Q7TSK2">
    <property type="molecule type" value="protein"/>
</dbReference>
<dbReference type="Bgee" id="ENSMUSG00000000632">
    <property type="expression patterns" value="Expressed in cortical plate and 115 other cell types or tissues"/>
</dbReference>
<dbReference type="ExpressionAtlas" id="Q7TSK2">
    <property type="expression patterns" value="baseline and differential"/>
</dbReference>
<dbReference type="GO" id="GO:0097440">
    <property type="term" value="C:apical dendrite"/>
    <property type="evidence" value="ECO:0000314"/>
    <property type="project" value="MGI"/>
</dbReference>
<dbReference type="GO" id="GO:0043198">
    <property type="term" value="C:dendritic shaft"/>
    <property type="evidence" value="ECO:0000314"/>
    <property type="project" value="MGI"/>
</dbReference>
<dbReference type="GO" id="GO:0043197">
    <property type="term" value="C:dendritic spine"/>
    <property type="evidence" value="ECO:0000314"/>
    <property type="project" value="MGI"/>
</dbReference>
<dbReference type="GO" id="GO:0005783">
    <property type="term" value="C:endoplasmic reticulum"/>
    <property type="evidence" value="ECO:0000314"/>
    <property type="project" value="MGI"/>
</dbReference>
<dbReference type="GO" id="GO:0005576">
    <property type="term" value="C:extracellular region"/>
    <property type="evidence" value="ECO:0007669"/>
    <property type="project" value="UniProtKB-SubCell"/>
</dbReference>
<dbReference type="GO" id="GO:0005615">
    <property type="term" value="C:extracellular space"/>
    <property type="evidence" value="ECO:0000314"/>
    <property type="project" value="MGI"/>
</dbReference>
<dbReference type="GO" id="GO:0043025">
    <property type="term" value="C:neuronal cell body"/>
    <property type="evidence" value="ECO:0000314"/>
    <property type="project" value="MGI"/>
</dbReference>
<dbReference type="GO" id="GO:0048471">
    <property type="term" value="C:perinuclear region of cytoplasm"/>
    <property type="evidence" value="ECO:0000314"/>
    <property type="project" value="MGI"/>
</dbReference>
<dbReference type="GO" id="GO:0005886">
    <property type="term" value="C:plasma membrane"/>
    <property type="evidence" value="ECO:0000255"/>
    <property type="project" value="MGI"/>
</dbReference>
<dbReference type="GO" id="GO:0008344">
    <property type="term" value="P:adult locomotory behavior"/>
    <property type="evidence" value="ECO:0000316"/>
    <property type="project" value="MGI"/>
</dbReference>
<dbReference type="GO" id="GO:0021680">
    <property type="term" value="P:cerebellar Purkinje cell layer development"/>
    <property type="evidence" value="ECO:0000316"/>
    <property type="project" value="MGI"/>
</dbReference>
<dbReference type="GO" id="GO:0060079">
    <property type="term" value="P:excitatory postsynaptic potential"/>
    <property type="evidence" value="ECO:0000315"/>
    <property type="project" value="MGI"/>
</dbReference>
<dbReference type="GO" id="GO:2000171">
    <property type="term" value="P:negative regulation of dendrite development"/>
    <property type="evidence" value="ECO:0000314"/>
    <property type="project" value="MGI"/>
</dbReference>
<dbReference type="GO" id="GO:1900006">
    <property type="term" value="P:positive regulation of dendrite development"/>
    <property type="evidence" value="ECO:0000314"/>
    <property type="project" value="MGI"/>
</dbReference>
<dbReference type="GO" id="GO:0050773">
    <property type="term" value="P:regulation of dendrite development"/>
    <property type="evidence" value="ECO:0000315"/>
    <property type="project" value="MGI"/>
</dbReference>
<dbReference type="GO" id="GO:0060074">
    <property type="term" value="P:synapse maturation"/>
    <property type="evidence" value="ECO:0000316"/>
    <property type="project" value="MGI"/>
</dbReference>
<dbReference type="CDD" id="cd00033">
    <property type="entry name" value="CCP"/>
    <property type="match status" value="5"/>
</dbReference>
<dbReference type="CDD" id="cd00041">
    <property type="entry name" value="CUB"/>
    <property type="match status" value="3"/>
</dbReference>
<dbReference type="FunFam" id="2.60.120.290:FF:000015">
    <property type="entry name" value="Seizure protein 6 homolog isoform 2"/>
    <property type="match status" value="1"/>
</dbReference>
<dbReference type="FunFam" id="2.60.120.290:FF:000025">
    <property type="entry name" value="Seizure related 6 homolog"/>
    <property type="match status" value="1"/>
</dbReference>
<dbReference type="FunFam" id="2.10.70.10:FF:000009">
    <property type="entry name" value="Seizure related 6 homolog like"/>
    <property type="match status" value="1"/>
</dbReference>
<dbReference type="FunFam" id="2.10.70.10:FF:000010">
    <property type="entry name" value="Seizure related 6 homolog like"/>
    <property type="match status" value="1"/>
</dbReference>
<dbReference type="FunFam" id="2.10.70.10:FF:000012">
    <property type="entry name" value="Seizure related 6 homolog like"/>
    <property type="match status" value="1"/>
</dbReference>
<dbReference type="Gene3D" id="2.10.70.10">
    <property type="entry name" value="Complement Module, domain 1"/>
    <property type="match status" value="5"/>
</dbReference>
<dbReference type="Gene3D" id="2.60.120.290">
    <property type="entry name" value="Spermadhesin, CUB domain"/>
    <property type="match status" value="2"/>
</dbReference>
<dbReference type="InterPro" id="IPR000859">
    <property type="entry name" value="CUB_dom"/>
</dbReference>
<dbReference type="InterPro" id="IPR051277">
    <property type="entry name" value="SEZ6_CSMD_C4BPB_Regulators"/>
</dbReference>
<dbReference type="InterPro" id="IPR035914">
    <property type="entry name" value="Sperma_CUB_dom_sf"/>
</dbReference>
<dbReference type="InterPro" id="IPR035976">
    <property type="entry name" value="Sushi/SCR/CCP_sf"/>
</dbReference>
<dbReference type="InterPro" id="IPR000436">
    <property type="entry name" value="Sushi_SCR_CCP_dom"/>
</dbReference>
<dbReference type="PANTHER" id="PTHR45656">
    <property type="entry name" value="PROTEIN CBR-CLEC-78"/>
    <property type="match status" value="1"/>
</dbReference>
<dbReference type="PANTHER" id="PTHR45656:SF4">
    <property type="entry name" value="PROTEIN CBR-CLEC-78"/>
    <property type="match status" value="1"/>
</dbReference>
<dbReference type="Pfam" id="PF00431">
    <property type="entry name" value="CUB"/>
    <property type="match status" value="2"/>
</dbReference>
<dbReference type="Pfam" id="PF00084">
    <property type="entry name" value="Sushi"/>
    <property type="match status" value="5"/>
</dbReference>
<dbReference type="SMART" id="SM00032">
    <property type="entry name" value="CCP"/>
    <property type="match status" value="5"/>
</dbReference>
<dbReference type="SMART" id="SM00042">
    <property type="entry name" value="CUB"/>
    <property type="match status" value="3"/>
</dbReference>
<dbReference type="SUPFAM" id="SSF57535">
    <property type="entry name" value="Complement control module/SCR domain"/>
    <property type="match status" value="5"/>
</dbReference>
<dbReference type="SUPFAM" id="SSF49854">
    <property type="entry name" value="Spermadhesin, CUB domain"/>
    <property type="match status" value="3"/>
</dbReference>
<dbReference type="PROSITE" id="PS01180">
    <property type="entry name" value="CUB"/>
    <property type="match status" value="2"/>
</dbReference>
<dbReference type="PROSITE" id="PS50923">
    <property type="entry name" value="SUSHI"/>
    <property type="match status" value="5"/>
</dbReference>
<feature type="signal peptide" evidence="2">
    <location>
        <begin position="1"/>
        <end position="19"/>
    </location>
</feature>
<feature type="chain" id="PRO_0000341348" description="Seizure protein 6">
    <location>
        <begin position="20"/>
        <end position="991"/>
    </location>
</feature>
<feature type="topological domain" description="Extracellular" evidence="2">
    <location>
        <begin position="20"/>
        <end position="922"/>
    </location>
</feature>
<feature type="transmembrane region" description="Helical" evidence="2">
    <location>
        <begin position="923"/>
        <end position="943"/>
    </location>
</feature>
<feature type="topological domain" description="Cytoplasmic" evidence="2">
    <location>
        <begin position="944"/>
        <end position="991"/>
    </location>
</feature>
<feature type="domain" description="CUB 1" evidence="3">
    <location>
        <begin position="241"/>
        <end position="353"/>
    </location>
</feature>
<feature type="domain" description="Sushi 1" evidence="4">
    <location>
        <begin position="352"/>
        <end position="411"/>
    </location>
</feature>
<feature type="domain" description="CUB 2" evidence="3">
    <location>
        <begin position="413"/>
        <end position="524"/>
    </location>
</feature>
<feature type="domain" description="Sushi 2" evidence="4">
    <location>
        <begin position="527"/>
        <end position="588"/>
    </location>
</feature>
<feature type="domain" description="CUB 3" evidence="3">
    <location>
        <begin position="590"/>
        <end position="701"/>
    </location>
</feature>
<feature type="domain" description="Sushi 3" evidence="4">
    <location>
        <begin position="705"/>
        <end position="764"/>
    </location>
</feature>
<feature type="domain" description="Sushi 4" evidence="4">
    <location>
        <begin position="766"/>
        <end position="829"/>
    </location>
</feature>
<feature type="domain" description="Sushi 5" evidence="4">
    <location>
        <begin position="833"/>
        <end position="894"/>
    </location>
</feature>
<feature type="region of interest" description="Disordered" evidence="5">
    <location>
        <begin position="79"/>
        <end position="193"/>
    </location>
</feature>
<feature type="compositionally biased region" description="Low complexity" evidence="5">
    <location>
        <begin position="119"/>
        <end position="132"/>
    </location>
</feature>
<feature type="compositionally biased region" description="Polar residues" evidence="5">
    <location>
        <begin position="175"/>
        <end position="184"/>
    </location>
</feature>
<feature type="glycosylation site" description="N-linked (GlcNAc...) asparagine" evidence="2">
    <location>
        <position position="286"/>
    </location>
</feature>
<feature type="glycosylation site" description="N-linked (GlcNAc...) asparagine" evidence="2">
    <location>
        <position position="396"/>
    </location>
</feature>
<feature type="glycosylation site" description="N-linked (GlcNAc...) asparagine" evidence="2">
    <location>
        <position position="433"/>
    </location>
</feature>
<feature type="glycosylation site" description="N-linked (GlcNAc...) asparagine" evidence="2">
    <location>
        <position position="538"/>
    </location>
</feature>
<feature type="disulfide bond" evidence="1">
    <location>
        <begin position="241"/>
        <end position="268"/>
    </location>
</feature>
<feature type="disulfide bond" evidence="1">
    <location>
        <begin position="354"/>
        <end position="394"/>
    </location>
</feature>
<feature type="disulfide bond" evidence="1">
    <location>
        <begin position="380"/>
        <end position="409"/>
    </location>
</feature>
<feature type="disulfide bond" evidence="1">
    <location>
        <begin position="413"/>
        <end position="440"/>
    </location>
</feature>
<feature type="disulfide bond" evidence="1">
    <location>
        <begin position="529"/>
        <end position="571"/>
    </location>
</feature>
<feature type="disulfide bond" evidence="1">
    <location>
        <begin position="556"/>
        <end position="586"/>
    </location>
</feature>
<feature type="disulfide bond" evidence="1">
    <location>
        <begin position="590"/>
        <end position="616"/>
    </location>
</feature>
<feature type="disulfide bond" evidence="1">
    <location>
        <begin position="707"/>
        <end position="749"/>
    </location>
</feature>
<feature type="disulfide bond" evidence="1">
    <location>
        <begin position="735"/>
        <end position="762"/>
    </location>
</feature>
<feature type="disulfide bond" evidence="1">
    <location>
        <begin position="768"/>
        <end position="810"/>
    </location>
</feature>
<feature type="disulfide bond" evidence="1">
    <location>
        <begin position="796"/>
        <end position="827"/>
    </location>
</feature>
<feature type="disulfide bond" evidence="1">
    <location>
        <begin position="835"/>
        <end position="877"/>
    </location>
</feature>
<feature type="disulfide bond" evidence="1">
    <location>
        <begin position="863"/>
        <end position="892"/>
    </location>
</feature>
<feature type="splice variant" id="VSP_034254" description="In isoform 3." evidence="11 12">
    <original>AVCSGEITDSAGVVLSPN</original>
    <variation>GQQAPVGGSARATSRVGP</variation>
    <location>
        <begin position="588"/>
        <end position="605"/>
    </location>
</feature>
<feature type="splice variant" id="VSP_034255" description="In isoform 3." evidence="11 12">
    <location>
        <begin position="606"/>
        <end position="991"/>
    </location>
</feature>
<feature type="splice variant" id="VSP_034256" description="In isoform 2." evidence="13">
    <location>
        <begin position="895"/>
        <end position="907"/>
    </location>
</feature>
<feature type="splice variant" id="VSP_034257" description="In isoform 2." evidence="13">
    <original>SLSFAGDERI</original>
    <variation>ETREYEVSI</variation>
    <location>
        <begin position="982"/>
        <end position="991"/>
    </location>
</feature>
<feature type="sequence conflict" description="In Ref. 1; BAA10889/BAA10890, 2; BAA06167 and 3; BAE44444." evidence="14" ref="1 2 3">
    <original>A</original>
    <variation>G</variation>
    <location>
        <position position="216"/>
    </location>
</feature>
<feature type="sequence conflict" description="In Ref. 1; BAA10889/BAA10890, 2; BAA06167 and 3; BAE44444." evidence="14" ref="1 2 3">
    <original>A</original>
    <variation>P</variation>
    <location>
        <position position="446"/>
    </location>
</feature>
<feature type="sequence conflict" description="In Ref. 1; BAA10889/BAA10890, 2; BAA06167 and 3; BAE44444." evidence="14" ref="1 2 3">
    <original>G</original>
    <variation>R</variation>
    <location>
        <position position="527"/>
    </location>
</feature>
<feature type="sequence conflict" description="In Ref. 1; BAA10889, 2; BAA06167 and 3; BAE44444." evidence="14" ref="1 2 3">
    <original>D</original>
    <variation>N</variation>
    <location>
        <position position="705"/>
    </location>
</feature>
<reference key="1">
    <citation type="journal article" date="1995" name="Biochem. Biophys. Res. Commun.">
        <title>Cloning and characterization of seizure-related gene, SEZ-6.</title>
        <authorList>
            <person name="Shimizu-Nishikawa K."/>
            <person name="Kajiwara K."/>
            <person name="Sugaya E."/>
        </authorList>
    </citation>
    <scope>NUCLEOTIDE SEQUENCE [MRNA] (ISOFORMS 1 AND 3)</scope>
    <scope>SUBCELLULAR LOCATION</scope>
    <scope>ALTERNATIVE SPLICING</scope>
    <scope>TISSUE SPECIFICITY</scope>
    <scope>GLYCOSYLATION</scope>
    <source>
        <strain>C57BL/6J</strain>
        <tissue>Brain</tissue>
    </source>
</reference>
<reference key="2">
    <citation type="journal article" date="1995" name="Brain Res. Mol. Brain Res.">
        <title>Cloning and expression of SEZ-6, a brain-specific and seizure-related cDNA.</title>
        <authorList>
            <person name="Shimizu-Nishikawa K."/>
            <person name="Kajiwara K."/>
            <person name="Kimura M."/>
            <person name="Katsuki M."/>
            <person name="Sugaya E."/>
        </authorList>
    </citation>
    <scope>NUCLEOTIDE SEQUENCE [MRNA] (ISOFORM 2)</scope>
    <scope>SUBCELLULAR LOCATION</scope>
    <scope>TISSUE SPECIFICITY</scope>
    <source>
        <strain>C57BL/6J</strain>
        <tissue>Brain cortex</tissue>
    </source>
</reference>
<reference key="3">
    <citation type="journal article" date="2006" name="FEBS Lett.">
        <title>Disturbance of cerebellar synaptic maturation in mutant mice lacking BSRPs, a novel brain-specific receptor-like protein family.</title>
        <authorList>
            <person name="Miyazaki T."/>
            <person name="Hashimoto K."/>
            <person name="Uda A."/>
            <person name="Sakagami H."/>
            <person name="Nakamura Y."/>
            <person name="Saito S.Y."/>
            <person name="Nishi M."/>
            <person name="Kume H."/>
            <person name="Tohgo A."/>
            <person name="Kaneko I."/>
            <person name="Kondo H."/>
            <person name="Fukunaga K."/>
            <person name="Kano M."/>
            <person name="Watanabe M."/>
            <person name="Takeshima H."/>
        </authorList>
    </citation>
    <scope>NUCLEOTIDE SEQUENCE [MRNA]</scope>
    <scope>SUBCELLULAR LOCATION</scope>
    <scope>ALTERNATIVE SPLICING</scope>
    <scope>TISSUE SPECIFICITY</scope>
    <scope>DISRUPTION PHENOTYPE</scope>
    <source>
        <strain>C57BL/6J</strain>
        <tissue>Brain</tissue>
    </source>
</reference>
<reference key="4">
    <citation type="journal article" date="2009" name="PLoS Biol.">
        <title>Lineage-specific biology revealed by a finished genome assembly of the mouse.</title>
        <authorList>
            <person name="Church D.M."/>
            <person name="Goodstadt L."/>
            <person name="Hillier L.W."/>
            <person name="Zody M.C."/>
            <person name="Goldstein S."/>
            <person name="She X."/>
            <person name="Bult C.J."/>
            <person name="Agarwala R."/>
            <person name="Cherry J.L."/>
            <person name="DiCuccio M."/>
            <person name="Hlavina W."/>
            <person name="Kapustin Y."/>
            <person name="Meric P."/>
            <person name="Maglott D."/>
            <person name="Birtle Z."/>
            <person name="Marques A.C."/>
            <person name="Graves T."/>
            <person name="Zhou S."/>
            <person name="Teague B."/>
            <person name="Potamousis K."/>
            <person name="Churas C."/>
            <person name="Place M."/>
            <person name="Herschleb J."/>
            <person name="Runnheim R."/>
            <person name="Forrest D."/>
            <person name="Amos-Landgraf J."/>
            <person name="Schwartz D.C."/>
            <person name="Cheng Z."/>
            <person name="Lindblad-Toh K."/>
            <person name="Eichler E.E."/>
            <person name="Ponting C.P."/>
        </authorList>
    </citation>
    <scope>NUCLEOTIDE SEQUENCE [LARGE SCALE GENOMIC DNA]</scope>
    <source>
        <strain>C57BL/6J</strain>
    </source>
</reference>
<reference key="5">
    <citation type="journal article" date="2004" name="Genome Res.">
        <title>The status, quality, and expansion of the NIH full-length cDNA project: the Mammalian Gene Collection (MGC).</title>
        <authorList>
            <consortium name="The MGC Project Team"/>
        </authorList>
    </citation>
    <scope>NUCLEOTIDE SEQUENCE [LARGE SCALE MRNA] (ISOFORMS 1 AND 3)</scope>
    <source>
        <strain>C57BL/6J</strain>
        <tissue>Brain</tissue>
    </source>
</reference>
<reference key="6">
    <citation type="journal article" date="2005" name="Science">
        <title>The transcriptional landscape of the mammalian genome.</title>
        <authorList>
            <person name="Carninci P."/>
            <person name="Kasukawa T."/>
            <person name="Katayama S."/>
            <person name="Gough J."/>
            <person name="Frith M.C."/>
            <person name="Maeda N."/>
            <person name="Oyama R."/>
            <person name="Ravasi T."/>
            <person name="Lenhard B."/>
            <person name="Wells C."/>
            <person name="Kodzius R."/>
            <person name="Shimokawa K."/>
            <person name="Bajic V.B."/>
            <person name="Brenner S.E."/>
            <person name="Batalov S."/>
            <person name="Forrest A.R."/>
            <person name="Zavolan M."/>
            <person name="Davis M.J."/>
            <person name="Wilming L.G."/>
            <person name="Aidinis V."/>
            <person name="Allen J.E."/>
            <person name="Ambesi-Impiombato A."/>
            <person name="Apweiler R."/>
            <person name="Aturaliya R.N."/>
            <person name="Bailey T.L."/>
            <person name="Bansal M."/>
            <person name="Baxter L."/>
            <person name="Beisel K.W."/>
            <person name="Bersano T."/>
            <person name="Bono H."/>
            <person name="Chalk A.M."/>
            <person name="Chiu K.P."/>
            <person name="Choudhary V."/>
            <person name="Christoffels A."/>
            <person name="Clutterbuck D.R."/>
            <person name="Crowe M.L."/>
            <person name="Dalla E."/>
            <person name="Dalrymple B.P."/>
            <person name="de Bono B."/>
            <person name="Della Gatta G."/>
            <person name="di Bernardo D."/>
            <person name="Down T."/>
            <person name="Engstrom P."/>
            <person name="Fagiolini M."/>
            <person name="Faulkner G."/>
            <person name="Fletcher C.F."/>
            <person name="Fukushima T."/>
            <person name="Furuno M."/>
            <person name="Futaki S."/>
            <person name="Gariboldi M."/>
            <person name="Georgii-Hemming P."/>
            <person name="Gingeras T.R."/>
            <person name="Gojobori T."/>
            <person name="Green R.E."/>
            <person name="Gustincich S."/>
            <person name="Harbers M."/>
            <person name="Hayashi Y."/>
            <person name="Hensch T.K."/>
            <person name="Hirokawa N."/>
            <person name="Hill D."/>
            <person name="Huminiecki L."/>
            <person name="Iacono M."/>
            <person name="Ikeo K."/>
            <person name="Iwama A."/>
            <person name="Ishikawa T."/>
            <person name="Jakt M."/>
            <person name="Kanapin A."/>
            <person name="Katoh M."/>
            <person name="Kawasawa Y."/>
            <person name="Kelso J."/>
            <person name="Kitamura H."/>
            <person name="Kitano H."/>
            <person name="Kollias G."/>
            <person name="Krishnan S.P."/>
            <person name="Kruger A."/>
            <person name="Kummerfeld S.K."/>
            <person name="Kurochkin I.V."/>
            <person name="Lareau L.F."/>
            <person name="Lazarevic D."/>
            <person name="Lipovich L."/>
            <person name="Liu J."/>
            <person name="Liuni S."/>
            <person name="McWilliam S."/>
            <person name="Madan Babu M."/>
            <person name="Madera M."/>
            <person name="Marchionni L."/>
            <person name="Matsuda H."/>
            <person name="Matsuzawa S."/>
            <person name="Miki H."/>
            <person name="Mignone F."/>
            <person name="Miyake S."/>
            <person name="Morris K."/>
            <person name="Mottagui-Tabar S."/>
            <person name="Mulder N."/>
            <person name="Nakano N."/>
            <person name="Nakauchi H."/>
            <person name="Ng P."/>
            <person name="Nilsson R."/>
            <person name="Nishiguchi S."/>
            <person name="Nishikawa S."/>
            <person name="Nori F."/>
            <person name="Ohara O."/>
            <person name="Okazaki Y."/>
            <person name="Orlando V."/>
            <person name="Pang K.C."/>
            <person name="Pavan W.J."/>
            <person name="Pavesi G."/>
            <person name="Pesole G."/>
            <person name="Petrovsky N."/>
            <person name="Piazza S."/>
            <person name="Reed J."/>
            <person name="Reid J.F."/>
            <person name="Ring B.Z."/>
            <person name="Ringwald M."/>
            <person name="Rost B."/>
            <person name="Ruan Y."/>
            <person name="Salzberg S.L."/>
            <person name="Sandelin A."/>
            <person name="Schneider C."/>
            <person name="Schoenbach C."/>
            <person name="Sekiguchi K."/>
            <person name="Semple C.A."/>
            <person name="Seno S."/>
            <person name="Sessa L."/>
            <person name="Sheng Y."/>
            <person name="Shibata Y."/>
            <person name="Shimada H."/>
            <person name="Shimada K."/>
            <person name="Silva D."/>
            <person name="Sinclair B."/>
            <person name="Sperling S."/>
            <person name="Stupka E."/>
            <person name="Sugiura K."/>
            <person name="Sultana R."/>
            <person name="Takenaka Y."/>
            <person name="Taki K."/>
            <person name="Tammoja K."/>
            <person name="Tan S.L."/>
            <person name="Tang S."/>
            <person name="Taylor M.S."/>
            <person name="Tegner J."/>
            <person name="Teichmann S.A."/>
            <person name="Ueda H.R."/>
            <person name="van Nimwegen E."/>
            <person name="Verardo R."/>
            <person name="Wei C.L."/>
            <person name="Yagi K."/>
            <person name="Yamanishi H."/>
            <person name="Zabarovsky E."/>
            <person name="Zhu S."/>
            <person name="Zimmer A."/>
            <person name="Hide W."/>
            <person name="Bult C."/>
            <person name="Grimmond S.M."/>
            <person name="Teasdale R.D."/>
            <person name="Liu E.T."/>
            <person name="Brusic V."/>
            <person name="Quackenbush J."/>
            <person name="Wahlestedt C."/>
            <person name="Mattick J.S."/>
            <person name="Hume D.A."/>
            <person name="Kai C."/>
            <person name="Sasaki D."/>
            <person name="Tomaru Y."/>
            <person name="Fukuda S."/>
            <person name="Kanamori-Katayama M."/>
            <person name="Suzuki M."/>
            <person name="Aoki J."/>
            <person name="Arakawa T."/>
            <person name="Iida J."/>
            <person name="Imamura K."/>
            <person name="Itoh M."/>
            <person name="Kato T."/>
            <person name="Kawaji H."/>
            <person name="Kawagashira N."/>
            <person name="Kawashima T."/>
            <person name="Kojima M."/>
            <person name="Kondo S."/>
            <person name="Konno H."/>
            <person name="Nakano K."/>
            <person name="Ninomiya N."/>
            <person name="Nishio T."/>
            <person name="Okada M."/>
            <person name="Plessy C."/>
            <person name="Shibata K."/>
            <person name="Shiraki T."/>
            <person name="Suzuki S."/>
            <person name="Tagami M."/>
            <person name="Waki K."/>
            <person name="Watahiki A."/>
            <person name="Okamura-Oho Y."/>
            <person name="Suzuki H."/>
            <person name="Kawai J."/>
            <person name="Hayashizaki Y."/>
        </authorList>
    </citation>
    <scope>NUCLEOTIDE SEQUENCE [LARGE SCALE MRNA] OF 458-991 (ISOFORM 1)</scope>
    <source>
        <strain>C57BL/6J</strain>
        <tissue>Pituitary</tissue>
    </source>
</reference>
<reference key="7">
    <citation type="journal article" date="2002" name="Mech. Dev.">
        <title>Localized expression of the seizure-related gene SEZ-6 in developing and adult forebrains.</title>
        <authorList>
            <person name="Kim M.H."/>
            <person name="Gunnersen J.M."/>
            <person name="Tan S.S."/>
        </authorList>
    </citation>
    <scope>DEVELOPMENTAL STAGE</scope>
</reference>
<reference key="8">
    <citation type="journal article" date="2007" name="Neuron">
        <title>Sez-6 proteins affect dendritic arborization patterns and excitability of cortical pyramidal neurons.</title>
        <authorList>
            <person name="Gunnersen J.M."/>
            <person name="Kim M.H."/>
            <person name="Fuller S.J."/>
            <person name="De Silva M."/>
            <person name="Britto J.M."/>
            <person name="Hammond V.E."/>
            <person name="Davies P.J."/>
            <person name="Petrou S."/>
            <person name="Faber E.S."/>
            <person name="Sah P."/>
            <person name="Tan S.-S."/>
        </authorList>
    </citation>
    <scope>FUNCTION</scope>
    <scope>DISRUPTION PHENOTYPE</scope>
    <scope>DEVELOPMENTAL STAGE</scope>
</reference>
<reference key="9">
    <citation type="journal article" date="2010" name="Cell">
        <title>A tissue-specific atlas of mouse protein phosphorylation and expression.</title>
        <authorList>
            <person name="Huttlin E.L."/>
            <person name="Jedrychowski M.P."/>
            <person name="Elias J.E."/>
            <person name="Goswami T."/>
            <person name="Rad R."/>
            <person name="Beausoleil S.A."/>
            <person name="Villen J."/>
            <person name="Haas W."/>
            <person name="Sowa M.E."/>
            <person name="Gygi S.P."/>
        </authorList>
    </citation>
    <scope>IDENTIFICATION BY MASS SPECTROMETRY [LARGE SCALE ANALYSIS]</scope>
    <source>
        <tissue>Brain</tissue>
    </source>
</reference>
<comment type="function">
    <text evidence="8">May play a role in cell-cell recognition and in neuronal membrane signaling. Seems to be important for the achievement of the necessary balance between dendrite elongation and branching during the elaboration of a complex dendritic arbor. Involved in the development of appropriate excitatory synaptic connectivity.</text>
</comment>
<comment type="subcellular location">
    <molecule>Isoform 1</molecule>
    <subcellularLocation>
        <location>Cell membrane</location>
        <topology>Single-pass type I membrane protein</topology>
    </subcellularLocation>
    <subcellularLocation>
        <location>Cell projection</location>
        <location>Dendrite</location>
    </subcellularLocation>
    <text>Localized on dendrites and in the postsynaptic fraction. Does not appear to be enriched at synapses, at least not in the presynaptic axon terminal.</text>
</comment>
<comment type="subcellular location">
    <molecule>Isoform 2</molecule>
    <subcellularLocation>
        <location>Cell membrane</location>
        <topology>Single-pass type I membrane protein</topology>
    </subcellularLocation>
    <subcellularLocation>
        <location>Synapse</location>
    </subcellularLocation>
    <subcellularLocation>
        <location>Cell projection</location>
        <location>Dendrite</location>
    </subcellularLocation>
    <text>Localized on dendrites and in the synaptic and postsynaptic fraction.</text>
</comment>
<comment type="subcellular location">
    <molecule>Isoform 3</molecule>
    <subcellularLocation>
        <location evidence="14">Secreted</location>
    </subcellularLocation>
    <subcellularLocation>
        <location>Cytoplasm</location>
    </subcellularLocation>
</comment>
<comment type="alternative products">
    <event type="alternative splicing"/>
    <isoform>
        <id>Q7TSK2-1</id>
        <name>1</name>
        <name>Type 2</name>
        <sequence type="displayed"/>
    </isoform>
    <isoform>
        <id>Q7TSK2-2</id>
        <name>2</name>
        <name>Type 1</name>
        <sequence type="described" ref="VSP_034256 VSP_034257"/>
    </isoform>
    <isoform>
        <id>Q7TSK2-3</id>
        <name>3</name>
        <name>Type 3</name>
        <sequence type="described" ref="VSP_034254 VSP_034255"/>
    </isoform>
</comment>
<comment type="tissue specificity">
    <text evidence="7 9 10">Brain-specific. Expressed in extrasynaptic and synaptic subcellular fractions (at protein level). Expression correlates with the most active periods of cortical neurogenesis and neuronal maturation. Expression is restricted to the gray matter with higher levels in the forebrain including the olfactory bulb, anterior olfactory nuclei, olfactory tubercle, striatum, hippocampal CA1 pyramidal cell layer and cerebral cortex. Expression is up-regulated with the convulsant drug, pentylenetetrazole.</text>
</comment>
<comment type="developmental stage">
    <text evidence="6 8">At 11.5 dpc, expression is localized to the preplate and is absent from the ventricular zone which is the most prominent layer during early cortical development. At 13 dpc highly expressed in postmitotic, maturing neurons of the developing cortical plate and subplate. At 15 dpc expression is closely tied with the emergence of the neocortical layers and hippocampus. In the cortex, expression diminishes after birth, but continues in the deep layer pyramidal neurons and neuronal subpopulations of layer II/III. In the hippocampus, expression persists in CA1 pyramidal neurons and in the dentate gyrus. Postnatally, expression remains high in specific cortical neuron populations, particularly those of the deep cortical layers.</text>
</comment>
<comment type="PTM">
    <text evidence="9">Glycosylated.</text>
</comment>
<comment type="disruption phenotype">
    <text evidence="7 8">Mice show reduced exploratory behavior and motor coordination, altered maze performance, and poorer memory retention. Molecular, morphological, and electrophysiological evidence of defects in dendritic arbor patterning was also seen. Secreted and membrane-bound isoforms in null mutants exerted opposite actions. The secreted isoform showed an increased neurite number, while, the membrane-bound isoform displayed a decrease in dendritic arborization. Embryos were viable, fertile and normal in other respects. Mice lacking Sez6, Sez6l1, Sez6l2 exhibited motor discordination, and Purkinje cells were often innervated by multiple climbing fibers with different neuronal origins in the cerebellum.</text>
</comment>
<comment type="similarity">
    <text evidence="14">Belongs to the SEZ6 family.</text>
</comment>
<comment type="sequence caution" evidence="14">
    <conflict type="erroneous initiation">
        <sequence resource="EMBL-CDS" id="BAE36472"/>
    </conflict>
</comment>
<gene>
    <name type="primary">Sez6</name>
    <name type="synonym">Kiaa4158</name>
</gene>
<protein>
    <recommendedName>
        <fullName>Seizure protein 6</fullName>
        <shortName>SEZ-6</shortName>
    </recommendedName>
    <alternativeName>
        <fullName>Brain-specific receptor-like protein C</fullName>
        <shortName>BSRP-C</shortName>
    </alternativeName>
</protein>
<proteinExistence type="evidence at protein level"/>
<name>SEZ6_MOUSE</name>
<keyword id="KW-0025">Alternative splicing</keyword>
<keyword id="KW-1003">Cell membrane</keyword>
<keyword id="KW-0966">Cell projection</keyword>
<keyword id="KW-0963">Cytoplasm</keyword>
<keyword id="KW-1015">Disulfide bond</keyword>
<keyword id="KW-0325">Glycoprotein</keyword>
<keyword id="KW-0472">Membrane</keyword>
<keyword id="KW-1185">Reference proteome</keyword>
<keyword id="KW-0677">Repeat</keyword>
<keyword id="KW-0964">Secreted</keyword>
<keyword id="KW-0732">Signal</keyword>
<keyword id="KW-0768">Sushi</keyword>
<keyword id="KW-0770">Synapse</keyword>
<keyword id="KW-0812">Transmembrane</keyword>
<keyword id="KW-1133">Transmembrane helix</keyword>
<sequence>MRPAALLLLPSLLALLAHGLSSEAPITGEGHATGIRETDGELTAAPTPEQSDRGVHFVTTAPTLKLLNHHPLLEEFLQEGLEREEAPQPALPFQPDSPTHFTPSPLPRLTNQDNRPVFTSPTPAVAAAPTQPHSREKPWNLESKPPELSITSSLPPGPSMAVPTLLPEDRPSTTPPSQAWTPTQEGPGDMDRPWVPEVMSKTTGLGVEGTIATSTASGDDEETTTTIITTTVTTVQPPGPCSWNFSGPEGSLDSPTAPSSPSDVGLDCFYYISVYPGYGVEIKVENISLQEGETITVEGLGGPDPLPLANQSFLLRGQVIRSPTHQAALRFQSLPLPAGPGTFHFRYQAYLLSCHFPRRPAYGDVTVTSLHPGGSAHFHCATGYQLKGARFLTCLNATQPFWDSQEPVCIAACGGVIRNATTGRIVSPGFPGNYSNNLTCHWLLEAPESQRLHLHFEKVSLAEDDDRLIIRNGNNVEAPPVYDSYEVEYLPIEGLLSSGRHFFVEFSTDSSGAAAGMALRYEAFQQGHCYEPFVKYGNFSSSAPSYPVGTTVEFSCDPGYTLEQGSIIIECVDLHDPQWNETEPACRAVCSGEITDSAGVVLSPNWPEPYGRGQDCIWGVHVEEDKRIMLDIRVLRIGSGDVLTFYDGDDLTARVLGQYSGPRGHFKLFTSMADVTIQFQSDPGTSALGYQQGFVIHFFEVPRNDTCPELPEIPNGWKNPSQPELVHGTVVTYQCYPGYQVVGSSILMCQWDLSWSEDLPSCQRVTSCHDPGDVEHSRRLISSPKFPVGATVQYVCDQGFVLTGSAILTCHDRQAGSPKWSDRAPKCLLEQFKPCHGLSAPENGARSPEKRLHPAGATIHFSCAPGYVLKGQASIKCVPGHPSHWSDPPPICRAASLDGFYNGRSLDVAKAPAASSALDAAHLAAAIFLPLVAMVLLVGGVYLYFSRFQGKSPLQLPRTHPRPYNRITVESAFDNPTYETGSLSFAGDERI</sequence>
<organism>
    <name type="scientific">Mus musculus</name>
    <name type="common">Mouse</name>
    <dbReference type="NCBI Taxonomy" id="10090"/>
    <lineage>
        <taxon>Eukaryota</taxon>
        <taxon>Metazoa</taxon>
        <taxon>Chordata</taxon>
        <taxon>Craniata</taxon>
        <taxon>Vertebrata</taxon>
        <taxon>Euteleostomi</taxon>
        <taxon>Mammalia</taxon>
        <taxon>Eutheria</taxon>
        <taxon>Euarchontoglires</taxon>
        <taxon>Glires</taxon>
        <taxon>Rodentia</taxon>
        <taxon>Myomorpha</taxon>
        <taxon>Muroidea</taxon>
        <taxon>Muridae</taxon>
        <taxon>Murinae</taxon>
        <taxon>Mus</taxon>
        <taxon>Mus</taxon>
    </lineage>
</organism>
<evidence type="ECO:0000250" key="1"/>
<evidence type="ECO:0000255" key="2"/>
<evidence type="ECO:0000255" key="3">
    <source>
        <dbReference type="PROSITE-ProRule" id="PRU00059"/>
    </source>
</evidence>
<evidence type="ECO:0000255" key="4">
    <source>
        <dbReference type="PROSITE-ProRule" id="PRU00302"/>
    </source>
</evidence>
<evidence type="ECO:0000256" key="5">
    <source>
        <dbReference type="SAM" id="MobiDB-lite"/>
    </source>
</evidence>
<evidence type="ECO:0000269" key="6">
    <source>
    </source>
</evidence>
<evidence type="ECO:0000269" key="7">
    <source>
    </source>
</evidence>
<evidence type="ECO:0000269" key="8">
    <source>
    </source>
</evidence>
<evidence type="ECO:0000269" key="9">
    <source>
    </source>
</evidence>
<evidence type="ECO:0000269" key="10">
    <source>
    </source>
</evidence>
<evidence type="ECO:0000303" key="11">
    <source>
    </source>
</evidence>
<evidence type="ECO:0000303" key="12">
    <source>
    </source>
</evidence>
<evidence type="ECO:0000303" key="13">
    <source>
    </source>
</evidence>
<evidence type="ECO:0000305" key="14"/>
<accession>Q7TSK2</accession>
<accession>Q3TT53</accession>
<accession>Q62223</accession>
<accession>Q62224</accession>
<accession>Q62269</accession>
<accession>Q7TPC9</accession>